<proteinExistence type="inferred from homology"/>
<protein>
    <recommendedName>
        <fullName evidence="1">S-adenosylmethionine:tRNA ribosyltransferase-isomerase</fullName>
        <ecNumber evidence="1">2.4.99.17</ecNumber>
    </recommendedName>
    <alternativeName>
        <fullName evidence="1">Queuosine biosynthesis protein QueA</fullName>
    </alternativeName>
</protein>
<organism>
    <name type="scientific">Vibrio cholerae serotype O1 (strain ATCC 39541 / Classical Ogawa 395 / O395)</name>
    <dbReference type="NCBI Taxonomy" id="345073"/>
    <lineage>
        <taxon>Bacteria</taxon>
        <taxon>Pseudomonadati</taxon>
        <taxon>Pseudomonadota</taxon>
        <taxon>Gammaproteobacteria</taxon>
        <taxon>Vibrionales</taxon>
        <taxon>Vibrionaceae</taxon>
        <taxon>Vibrio</taxon>
    </lineage>
</organism>
<name>QUEA_VIBC3</name>
<keyword id="KW-0963">Cytoplasm</keyword>
<keyword id="KW-0671">Queuosine biosynthesis</keyword>
<keyword id="KW-0949">S-adenosyl-L-methionine</keyword>
<keyword id="KW-0808">Transferase</keyword>
<dbReference type="EC" id="2.4.99.17" evidence="1"/>
<dbReference type="EMBL" id="CP000627">
    <property type="protein sequence ID" value="ABQ21785.1"/>
    <property type="molecule type" value="Genomic_DNA"/>
</dbReference>
<dbReference type="EMBL" id="CP001235">
    <property type="protein sequence ID" value="ACP08773.1"/>
    <property type="molecule type" value="Genomic_DNA"/>
</dbReference>
<dbReference type="RefSeq" id="WP_001198120.1">
    <property type="nucleotide sequence ID" value="NZ_JAACZH010000017.1"/>
</dbReference>
<dbReference type="SMR" id="A5F3H1"/>
<dbReference type="GeneID" id="89515115"/>
<dbReference type="KEGG" id="vco:VC0395_A0269"/>
<dbReference type="KEGG" id="vcr:VC395_0756"/>
<dbReference type="PATRIC" id="fig|345073.21.peg.731"/>
<dbReference type="eggNOG" id="COG0809">
    <property type="taxonomic scope" value="Bacteria"/>
</dbReference>
<dbReference type="HOGENOM" id="CLU_039110_1_0_6"/>
<dbReference type="OrthoDB" id="9805933at2"/>
<dbReference type="UniPathway" id="UPA00392"/>
<dbReference type="Proteomes" id="UP000000249">
    <property type="component" value="Chromosome 2"/>
</dbReference>
<dbReference type="GO" id="GO:0005737">
    <property type="term" value="C:cytoplasm"/>
    <property type="evidence" value="ECO:0007669"/>
    <property type="project" value="UniProtKB-SubCell"/>
</dbReference>
<dbReference type="GO" id="GO:0051075">
    <property type="term" value="F:S-adenosylmethionine:tRNA ribosyltransferase-isomerase activity"/>
    <property type="evidence" value="ECO:0007669"/>
    <property type="project" value="UniProtKB-EC"/>
</dbReference>
<dbReference type="GO" id="GO:0008616">
    <property type="term" value="P:queuosine biosynthetic process"/>
    <property type="evidence" value="ECO:0007669"/>
    <property type="project" value="UniProtKB-UniRule"/>
</dbReference>
<dbReference type="GO" id="GO:0002099">
    <property type="term" value="P:tRNA wobble guanine modification"/>
    <property type="evidence" value="ECO:0007669"/>
    <property type="project" value="TreeGrafter"/>
</dbReference>
<dbReference type="FunFam" id="2.40.10.240:FF:000001">
    <property type="entry name" value="S-adenosylmethionine:tRNA ribosyltransferase-isomerase"/>
    <property type="match status" value="1"/>
</dbReference>
<dbReference type="FunFam" id="3.40.1780.10:FF:000001">
    <property type="entry name" value="S-adenosylmethionine:tRNA ribosyltransferase-isomerase"/>
    <property type="match status" value="1"/>
</dbReference>
<dbReference type="Gene3D" id="2.40.10.240">
    <property type="entry name" value="QueA-like"/>
    <property type="match status" value="1"/>
</dbReference>
<dbReference type="Gene3D" id="3.40.1780.10">
    <property type="entry name" value="QueA-like"/>
    <property type="match status" value="1"/>
</dbReference>
<dbReference type="HAMAP" id="MF_00113">
    <property type="entry name" value="QueA"/>
    <property type="match status" value="1"/>
</dbReference>
<dbReference type="InterPro" id="IPR003699">
    <property type="entry name" value="QueA"/>
</dbReference>
<dbReference type="InterPro" id="IPR042118">
    <property type="entry name" value="QueA_dom1"/>
</dbReference>
<dbReference type="InterPro" id="IPR042119">
    <property type="entry name" value="QueA_dom2"/>
</dbReference>
<dbReference type="InterPro" id="IPR036100">
    <property type="entry name" value="QueA_sf"/>
</dbReference>
<dbReference type="NCBIfam" id="NF001140">
    <property type="entry name" value="PRK00147.1"/>
    <property type="match status" value="1"/>
</dbReference>
<dbReference type="NCBIfam" id="TIGR00113">
    <property type="entry name" value="queA"/>
    <property type="match status" value="1"/>
</dbReference>
<dbReference type="PANTHER" id="PTHR30307">
    <property type="entry name" value="S-ADENOSYLMETHIONINE:TRNA RIBOSYLTRANSFERASE-ISOMERASE"/>
    <property type="match status" value="1"/>
</dbReference>
<dbReference type="PANTHER" id="PTHR30307:SF0">
    <property type="entry name" value="S-ADENOSYLMETHIONINE:TRNA RIBOSYLTRANSFERASE-ISOMERASE"/>
    <property type="match status" value="1"/>
</dbReference>
<dbReference type="Pfam" id="PF02547">
    <property type="entry name" value="Queuosine_synth"/>
    <property type="match status" value="1"/>
</dbReference>
<dbReference type="SUPFAM" id="SSF111337">
    <property type="entry name" value="QueA-like"/>
    <property type="match status" value="1"/>
</dbReference>
<accession>A5F3H1</accession>
<accession>C3LY49</accession>
<comment type="function">
    <text evidence="1">Transfers and isomerizes the ribose moiety from AdoMet to the 7-aminomethyl group of 7-deazaguanine (preQ1-tRNA) to give epoxyqueuosine (oQ-tRNA).</text>
</comment>
<comment type="catalytic activity">
    <reaction evidence="1">
        <text>7-aminomethyl-7-carbaguanosine(34) in tRNA + S-adenosyl-L-methionine = epoxyqueuosine(34) in tRNA + adenine + L-methionine + 2 H(+)</text>
        <dbReference type="Rhea" id="RHEA:32155"/>
        <dbReference type="Rhea" id="RHEA-COMP:10342"/>
        <dbReference type="Rhea" id="RHEA-COMP:18582"/>
        <dbReference type="ChEBI" id="CHEBI:15378"/>
        <dbReference type="ChEBI" id="CHEBI:16708"/>
        <dbReference type="ChEBI" id="CHEBI:57844"/>
        <dbReference type="ChEBI" id="CHEBI:59789"/>
        <dbReference type="ChEBI" id="CHEBI:82833"/>
        <dbReference type="ChEBI" id="CHEBI:194443"/>
        <dbReference type="EC" id="2.4.99.17"/>
    </reaction>
</comment>
<comment type="pathway">
    <text evidence="1">tRNA modification; tRNA-queuosine biosynthesis.</text>
</comment>
<comment type="subunit">
    <text evidence="1">Monomer.</text>
</comment>
<comment type="subcellular location">
    <subcellularLocation>
        <location evidence="1">Cytoplasm</location>
    </subcellularLocation>
</comment>
<comment type="similarity">
    <text evidence="1">Belongs to the QueA family.</text>
</comment>
<reference key="1">
    <citation type="submission" date="2007-03" db="EMBL/GenBank/DDBJ databases">
        <authorList>
            <person name="Heidelberg J."/>
        </authorList>
    </citation>
    <scope>NUCLEOTIDE SEQUENCE [LARGE SCALE GENOMIC DNA]</scope>
    <source>
        <strain>ATCC 39541 / Classical Ogawa 395 / O395</strain>
    </source>
</reference>
<reference key="2">
    <citation type="journal article" date="2008" name="PLoS ONE">
        <title>A recalibrated molecular clock and independent origins for the cholera pandemic clones.</title>
        <authorList>
            <person name="Feng L."/>
            <person name="Reeves P.R."/>
            <person name="Lan R."/>
            <person name="Ren Y."/>
            <person name="Gao C."/>
            <person name="Zhou Z."/>
            <person name="Ren Y."/>
            <person name="Cheng J."/>
            <person name="Wang W."/>
            <person name="Wang J."/>
            <person name="Qian W."/>
            <person name="Li D."/>
            <person name="Wang L."/>
        </authorList>
    </citation>
    <scope>NUCLEOTIDE SEQUENCE [LARGE SCALE GENOMIC DNA]</scope>
    <source>
        <strain>ATCC 39541 / Classical Ogawa 395 / O395</strain>
    </source>
</reference>
<evidence type="ECO:0000255" key="1">
    <source>
        <dbReference type="HAMAP-Rule" id="MF_00113"/>
    </source>
</evidence>
<feature type="chain" id="PRO_1000071343" description="S-adenosylmethionine:tRNA ribosyltransferase-isomerase">
    <location>
        <begin position="1"/>
        <end position="352"/>
    </location>
</feature>
<gene>
    <name evidence="1" type="primary">queA</name>
    <name type="ordered locus">VC0395_A0269</name>
    <name type="ordered locus">VC395_0756</name>
</gene>
<sequence>MQVSDFHFELPDELIARYPKAERTASRLLQLDGNSGQLVDGTFKDVLELVEPGDLLVFNNTRVIPARMFGRKASGGKLEVLVERMLDEHTILAHVRSSKPPKPGTELYLGENDEFHAVMQARHDALFEIRFTAETVVLDILNQIGHMPLPPYIDRPDEETDKERYQTVYNQKPGAVAAPTAGLHFDQALLEQIQAKGVELAYVTLHVGAGTFQPVRVENIHDHHMHAEYVEVPQEVVDAIAATKARGGRVVAVGTTSVRSLESAAQDALQKGTELKPFFGDTEIFIFPGYQYQLVDCLITNFHLPESTLIMLVSAFAGYEHTMAAYEHAVKEQYRFFSYGDAMFIRKQTTKA</sequence>